<evidence type="ECO:0000255" key="1">
    <source>
        <dbReference type="HAMAP-Rule" id="MF_00300"/>
    </source>
</evidence>
<evidence type="ECO:0000256" key="2">
    <source>
        <dbReference type="SAM" id="MobiDB-lite"/>
    </source>
</evidence>
<sequence>MAGSSFGRLFRITTWGESHGPALGVVIDGCPPGIPLAPEDIQRDLERRRPGKRLTSPRGEPDRVEILSGVFQGVTTGTPISLVIFNRDVRSGDYTELAEVYRPGHGDRTYEQKYGVRDWRGGGRSSGRETAARVAAGAVARKFLAGRGVEVKAYTVAFAGLHVDSFNRDEIDRNPFFCPDATAAAAMERRVEELRDAGDSCGGVVEVSARGCPAGLGEPVFDKLDARLAGALMSVGAVKGVEIGAGFAAAAMLGSENNDPLTPDGYASNNAGGVLAGISTGMDIVARAAVKPIPSISKPQQTVNTRGEPVTLSIKGRHDVSAIPRIVPVCEAMVLLVLADFMLHPAPVEKR</sequence>
<proteinExistence type="inferred from homology"/>
<feature type="chain" id="PRO_0000322426" description="Chorismate synthase">
    <location>
        <begin position="1"/>
        <end position="351"/>
    </location>
</feature>
<feature type="region of interest" description="Disordered" evidence="2">
    <location>
        <begin position="39"/>
        <end position="60"/>
    </location>
</feature>
<feature type="binding site" evidence="1">
    <location>
        <position position="48"/>
    </location>
    <ligand>
        <name>NADP(+)</name>
        <dbReference type="ChEBI" id="CHEBI:58349"/>
    </ligand>
</feature>
<feature type="binding site" evidence="1">
    <location>
        <position position="53"/>
    </location>
    <ligand>
        <name>NADP(+)</name>
        <dbReference type="ChEBI" id="CHEBI:58349"/>
    </ligand>
</feature>
<feature type="binding site" evidence="1">
    <location>
        <begin position="124"/>
        <end position="126"/>
    </location>
    <ligand>
        <name>FMN</name>
        <dbReference type="ChEBI" id="CHEBI:58210"/>
    </ligand>
</feature>
<feature type="binding site" evidence="1">
    <location>
        <position position="276"/>
    </location>
    <ligand>
        <name>FMN</name>
        <dbReference type="ChEBI" id="CHEBI:58210"/>
    </ligand>
</feature>
<feature type="binding site" evidence="1">
    <location>
        <begin position="291"/>
        <end position="295"/>
    </location>
    <ligand>
        <name>FMN</name>
        <dbReference type="ChEBI" id="CHEBI:58210"/>
    </ligand>
</feature>
<feature type="binding site" evidence="1">
    <location>
        <position position="317"/>
    </location>
    <ligand>
        <name>FMN</name>
        <dbReference type="ChEBI" id="CHEBI:58210"/>
    </ligand>
</feature>
<comment type="function">
    <text evidence="1">Catalyzes the anti-1,4-elimination of the C-3 phosphate and the C-6 proR hydrogen from 5-enolpyruvylshikimate-3-phosphate (EPSP) to yield chorismate, which is the branch point compound that serves as the starting substrate for the three terminal pathways of aromatic amino acid biosynthesis. This reaction introduces a second double bond into the aromatic ring system.</text>
</comment>
<comment type="catalytic activity">
    <reaction evidence="1">
        <text>5-O-(1-carboxyvinyl)-3-phosphoshikimate = chorismate + phosphate</text>
        <dbReference type="Rhea" id="RHEA:21020"/>
        <dbReference type="ChEBI" id="CHEBI:29748"/>
        <dbReference type="ChEBI" id="CHEBI:43474"/>
        <dbReference type="ChEBI" id="CHEBI:57701"/>
        <dbReference type="EC" id="4.2.3.5"/>
    </reaction>
</comment>
<comment type="cofactor">
    <cofactor evidence="1">
        <name>FMNH2</name>
        <dbReference type="ChEBI" id="CHEBI:57618"/>
    </cofactor>
    <text evidence="1">Reduced FMN (FMNH(2)).</text>
</comment>
<comment type="pathway">
    <text evidence="1">Metabolic intermediate biosynthesis; chorismate biosynthesis; chorismate from D-erythrose 4-phosphate and phosphoenolpyruvate: step 7/7.</text>
</comment>
<comment type="subunit">
    <text evidence="1">Homotetramer.</text>
</comment>
<comment type="similarity">
    <text evidence="1">Belongs to the chorismate synthase family.</text>
</comment>
<reference key="1">
    <citation type="submission" date="2006-10" db="EMBL/GenBank/DDBJ databases">
        <title>Complete sequence of Syntrophobacter fumaroxidans MPOB.</title>
        <authorList>
            <consortium name="US DOE Joint Genome Institute"/>
            <person name="Copeland A."/>
            <person name="Lucas S."/>
            <person name="Lapidus A."/>
            <person name="Barry K."/>
            <person name="Detter J.C."/>
            <person name="Glavina del Rio T."/>
            <person name="Hammon N."/>
            <person name="Israni S."/>
            <person name="Pitluck S."/>
            <person name="Goltsman E.G."/>
            <person name="Martinez M."/>
            <person name="Schmutz J."/>
            <person name="Larimer F."/>
            <person name="Land M."/>
            <person name="Hauser L."/>
            <person name="Kyrpides N."/>
            <person name="Kim E."/>
            <person name="Boone D.R."/>
            <person name="Brockman F."/>
            <person name="Culley D."/>
            <person name="Ferry J."/>
            <person name="Gunsalus R."/>
            <person name="McInerney M.J."/>
            <person name="Morrison M."/>
            <person name="Plugge C."/>
            <person name="Rohlin L."/>
            <person name="Scholten J."/>
            <person name="Sieber J."/>
            <person name="Stams A.J.M."/>
            <person name="Worm P."/>
            <person name="Henstra A.M."/>
            <person name="Richardson P."/>
        </authorList>
    </citation>
    <scope>NUCLEOTIDE SEQUENCE [LARGE SCALE GENOMIC DNA]</scope>
    <source>
        <strain>DSM 10017 / MPOB</strain>
    </source>
</reference>
<dbReference type="EC" id="4.2.3.5" evidence="1"/>
<dbReference type="EMBL" id="CP000478">
    <property type="protein sequence ID" value="ABK15744.1"/>
    <property type="molecule type" value="Genomic_DNA"/>
</dbReference>
<dbReference type="RefSeq" id="WP_011696917.1">
    <property type="nucleotide sequence ID" value="NC_008554.1"/>
</dbReference>
<dbReference type="SMR" id="A0LE92"/>
<dbReference type="FunCoup" id="A0LE92">
    <property type="interactions" value="480"/>
</dbReference>
<dbReference type="STRING" id="335543.Sfum_0041"/>
<dbReference type="KEGG" id="sfu:Sfum_0041"/>
<dbReference type="eggNOG" id="COG0082">
    <property type="taxonomic scope" value="Bacteria"/>
</dbReference>
<dbReference type="HOGENOM" id="CLU_034547_0_2_7"/>
<dbReference type="InParanoid" id="A0LE92"/>
<dbReference type="OrthoDB" id="9771806at2"/>
<dbReference type="UniPathway" id="UPA00053">
    <property type="reaction ID" value="UER00090"/>
</dbReference>
<dbReference type="Proteomes" id="UP000001784">
    <property type="component" value="Chromosome"/>
</dbReference>
<dbReference type="GO" id="GO:0005829">
    <property type="term" value="C:cytosol"/>
    <property type="evidence" value="ECO:0007669"/>
    <property type="project" value="TreeGrafter"/>
</dbReference>
<dbReference type="GO" id="GO:0004107">
    <property type="term" value="F:chorismate synthase activity"/>
    <property type="evidence" value="ECO:0007669"/>
    <property type="project" value="UniProtKB-UniRule"/>
</dbReference>
<dbReference type="GO" id="GO:0010181">
    <property type="term" value="F:FMN binding"/>
    <property type="evidence" value="ECO:0007669"/>
    <property type="project" value="TreeGrafter"/>
</dbReference>
<dbReference type="GO" id="GO:0008652">
    <property type="term" value="P:amino acid biosynthetic process"/>
    <property type="evidence" value="ECO:0007669"/>
    <property type="project" value="UniProtKB-KW"/>
</dbReference>
<dbReference type="GO" id="GO:0009073">
    <property type="term" value="P:aromatic amino acid family biosynthetic process"/>
    <property type="evidence" value="ECO:0007669"/>
    <property type="project" value="UniProtKB-KW"/>
</dbReference>
<dbReference type="GO" id="GO:0009423">
    <property type="term" value="P:chorismate biosynthetic process"/>
    <property type="evidence" value="ECO:0007669"/>
    <property type="project" value="UniProtKB-UniRule"/>
</dbReference>
<dbReference type="CDD" id="cd07304">
    <property type="entry name" value="Chorismate_synthase"/>
    <property type="match status" value="1"/>
</dbReference>
<dbReference type="Gene3D" id="3.60.150.10">
    <property type="entry name" value="Chorismate synthase AroC"/>
    <property type="match status" value="1"/>
</dbReference>
<dbReference type="HAMAP" id="MF_00300">
    <property type="entry name" value="Chorismate_synth"/>
    <property type="match status" value="1"/>
</dbReference>
<dbReference type="InterPro" id="IPR000453">
    <property type="entry name" value="Chorismate_synth"/>
</dbReference>
<dbReference type="InterPro" id="IPR035904">
    <property type="entry name" value="Chorismate_synth_AroC_sf"/>
</dbReference>
<dbReference type="InterPro" id="IPR020541">
    <property type="entry name" value="Chorismate_synthase_CS"/>
</dbReference>
<dbReference type="NCBIfam" id="TIGR00033">
    <property type="entry name" value="aroC"/>
    <property type="match status" value="1"/>
</dbReference>
<dbReference type="NCBIfam" id="NF003793">
    <property type="entry name" value="PRK05382.1"/>
    <property type="match status" value="1"/>
</dbReference>
<dbReference type="PANTHER" id="PTHR21085">
    <property type="entry name" value="CHORISMATE SYNTHASE"/>
    <property type="match status" value="1"/>
</dbReference>
<dbReference type="PANTHER" id="PTHR21085:SF0">
    <property type="entry name" value="CHORISMATE SYNTHASE"/>
    <property type="match status" value="1"/>
</dbReference>
<dbReference type="Pfam" id="PF01264">
    <property type="entry name" value="Chorismate_synt"/>
    <property type="match status" value="1"/>
</dbReference>
<dbReference type="PIRSF" id="PIRSF001456">
    <property type="entry name" value="Chorismate_synth"/>
    <property type="match status" value="1"/>
</dbReference>
<dbReference type="SUPFAM" id="SSF103263">
    <property type="entry name" value="Chorismate synthase, AroC"/>
    <property type="match status" value="1"/>
</dbReference>
<dbReference type="PROSITE" id="PS00787">
    <property type="entry name" value="CHORISMATE_SYNTHASE_1"/>
    <property type="match status" value="1"/>
</dbReference>
<dbReference type="PROSITE" id="PS00788">
    <property type="entry name" value="CHORISMATE_SYNTHASE_2"/>
    <property type="match status" value="1"/>
</dbReference>
<dbReference type="PROSITE" id="PS00789">
    <property type="entry name" value="CHORISMATE_SYNTHASE_3"/>
    <property type="match status" value="1"/>
</dbReference>
<organism>
    <name type="scientific">Syntrophobacter fumaroxidans (strain DSM 10017 / MPOB)</name>
    <dbReference type="NCBI Taxonomy" id="335543"/>
    <lineage>
        <taxon>Bacteria</taxon>
        <taxon>Pseudomonadati</taxon>
        <taxon>Thermodesulfobacteriota</taxon>
        <taxon>Syntrophobacteria</taxon>
        <taxon>Syntrophobacterales</taxon>
        <taxon>Syntrophobacteraceae</taxon>
        <taxon>Syntrophobacter</taxon>
    </lineage>
</organism>
<name>AROC_SYNFM</name>
<gene>
    <name evidence="1" type="primary">aroC</name>
    <name type="ordered locus">Sfum_0041</name>
</gene>
<keyword id="KW-0028">Amino-acid biosynthesis</keyword>
<keyword id="KW-0057">Aromatic amino acid biosynthesis</keyword>
<keyword id="KW-0274">FAD</keyword>
<keyword id="KW-0285">Flavoprotein</keyword>
<keyword id="KW-0288">FMN</keyword>
<keyword id="KW-0456">Lyase</keyword>
<keyword id="KW-0521">NADP</keyword>
<keyword id="KW-1185">Reference proteome</keyword>
<accession>A0LE92</accession>
<protein>
    <recommendedName>
        <fullName evidence="1">Chorismate synthase</fullName>
        <shortName evidence="1">CS</shortName>
        <ecNumber evidence="1">4.2.3.5</ecNumber>
    </recommendedName>
    <alternativeName>
        <fullName evidence="1">5-enolpyruvylshikimate-3-phosphate phospholyase</fullName>
    </alternativeName>
</protein>